<gene>
    <name type="primary">rpmB</name>
    <name type="synonym">rpl28</name>
    <name type="ordered locus">UU209.1</name>
</gene>
<protein>
    <recommendedName>
        <fullName evidence="2">Large ribosomal subunit protein bL28</fullName>
    </recommendedName>
    <alternativeName>
        <fullName>50S ribosomal protein L28</fullName>
    </alternativeName>
</protein>
<evidence type="ECO:0000256" key="1">
    <source>
        <dbReference type="SAM" id="MobiDB-lite"/>
    </source>
</evidence>
<evidence type="ECO:0000305" key="2"/>
<reference key="1">
    <citation type="journal article" date="2000" name="Nature">
        <title>The complete sequence of the mucosal pathogen Ureaplasma urealyticum.</title>
        <authorList>
            <person name="Glass J.I."/>
            <person name="Lefkowitz E.J."/>
            <person name="Glass J.S."/>
            <person name="Heiner C.R."/>
            <person name="Chen E.Y."/>
            <person name="Cassell G.H."/>
        </authorList>
    </citation>
    <scope>NUCLEOTIDE SEQUENCE [LARGE SCALE GENOMIC DNA]</scope>
    <source>
        <strain>ATCC 700970</strain>
    </source>
</reference>
<organism>
    <name type="scientific">Ureaplasma parvum serovar 3 (strain ATCC 700970)</name>
    <dbReference type="NCBI Taxonomy" id="273119"/>
    <lineage>
        <taxon>Bacteria</taxon>
        <taxon>Bacillati</taxon>
        <taxon>Mycoplasmatota</taxon>
        <taxon>Mycoplasmoidales</taxon>
        <taxon>Mycoplasmoidaceae</taxon>
        <taxon>Ureaplasma</taxon>
    </lineage>
</organism>
<dbReference type="EMBL" id="AF222894">
    <property type="protein sequence ID" value="AAF30617.1"/>
    <property type="molecule type" value="Genomic_DNA"/>
</dbReference>
<dbReference type="RefSeq" id="WP_004026215.1">
    <property type="nucleotide sequence ID" value="NC_002162.1"/>
</dbReference>
<dbReference type="SMR" id="Q9PQT3"/>
<dbReference type="STRING" id="273119.UU209.1"/>
<dbReference type="EnsemblBacteria" id="AAF30617">
    <property type="protein sequence ID" value="AAF30617"/>
    <property type="gene ID" value="UU209.1"/>
</dbReference>
<dbReference type="GeneID" id="93848682"/>
<dbReference type="KEGG" id="uur:UU209.1"/>
<dbReference type="eggNOG" id="COG0227">
    <property type="taxonomic scope" value="Bacteria"/>
</dbReference>
<dbReference type="HOGENOM" id="CLU_064548_7_2_14"/>
<dbReference type="OrthoDB" id="9805609at2"/>
<dbReference type="Proteomes" id="UP000000423">
    <property type="component" value="Chromosome"/>
</dbReference>
<dbReference type="GO" id="GO:1990904">
    <property type="term" value="C:ribonucleoprotein complex"/>
    <property type="evidence" value="ECO:0007669"/>
    <property type="project" value="UniProtKB-KW"/>
</dbReference>
<dbReference type="GO" id="GO:0005840">
    <property type="term" value="C:ribosome"/>
    <property type="evidence" value="ECO:0007669"/>
    <property type="project" value="UniProtKB-KW"/>
</dbReference>
<dbReference type="GO" id="GO:0003735">
    <property type="term" value="F:structural constituent of ribosome"/>
    <property type="evidence" value="ECO:0007669"/>
    <property type="project" value="InterPro"/>
</dbReference>
<dbReference type="GO" id="GO:0006412">
    <property type="term" value="P:translation"/>
    <property type="evidence" value="ECO:0007669"/>
    <property type="project" value="UniProtKB-UniRule"/>
</dbReference>
<dbReference type="Gene3D" id="2.30.170.40">
    <property type="entry name" value="Ribosomal protein L28/L24"/>
    <property type="match status" value="1"/>
</dbReference>
<dbReference type="HAMAP" id="MF_00373">
    <property type="entry name" value="Ribosomal_bL28"/>
    <property type="match status" value="1"/>
</dbReference>
<dbReference type="InterPro" id="IPR050096">
    <property type="entry name" value="Bacterial_rp_bL28"/>
</dbReference>
<dbReference type="InterPro" id="IPR026569">
    <property type="entry name" value="Ribosomal_bL28"/>
</dbReference>
<dbReference type="InterPro" id="IPR034704">
    <property type="entry name" value="Ribosomal_bL28/bL31-like_sf"/>
</dbReference>
<dbReference type="InterPro" id="IPR001383">
    <property type="entry name" value="Ribosomal_bL28_bact-type"/>
</dbReference>
<dbReference type="InterPro" id="IPR037147">
    <property type="entry name" value="Ribosomal_bL28_sf"/>
</dbReference>
<dbReference type="NCBIfam" id="TIGR00009">
    <property type="entry name" value="L28"/>
    <property type="match status" value="1"/>
</dbReference>
<dbReference type="PANTHER" id="PTHR39080">
    <property type="entry name" value="50S RIBOSOMAL PROTEIN L28"/>
    <property type="match status" value="1"/>
</dbReference>
<dbReference type="PANTHER" id="PTHR39080:SF1">
    <property type="entry name" value="LARGE RIBOSOMAL SUBUNIT PROTEIN BL28A"/>
    <property type="match status" value="1"/>
</dbReference>
<dbReference type="Pfam" id="PF00830">
    <property type="entry name" value="Ribosomal_L28"/>
    <property type="match status" value="1"/>
</dbReference>
<dbReference type="SUPFAM" id="SSF143800">
    <property type="entry name" value="L28p-like"/>
    <property type="match status" value="1"/>
</dbReference>
<accession>Q9PQT3</accession>
<comment type="similarity">
    <text evidence="2">Belongs to the bacterial ribosomal protein bL28 family.</text>
</comment>
<proteinExistence type="inferred from homology"/>
<name>RL28_UREPA</name>
<keyword id="KW-1185">Reference proteome</keyword>
<keyword id="KW-0687">Ribonucleoprotein</keyword>
<keyword id="KW-0689">Ribosomal protein</keyword>
<sequence length="64" mass="7164">MAKRDQLTGKGPLSGNTRSHAMNHSKRRWNVNLQKATIKTENGSQRVLVSAKTLKTLKKHNLLA</sequence>
<feature type="chain" id="PRO_0000178583" description="Large ribosomal subunit protein bL28">
    <location>
        <begin position="1"/>
        <end position="64"/>
    </location>
</feature>
<feature type="region of interest" description="Disordered" evidence="1">
    <location>
        <begin position="1"/>
        <end position="27"/>
    </location>
</feature>